<dbReference type="EC" id="3.4.24.-"/>
<dbReference type="EMBL" id="L23838">
    <property type="protein sequence ID" value="AAA30081.1"/>
    <property type="molecule type" value="mRNA"/>
</dbReference>
<dbReference type="RefSeq" id="NP_999728.1">
    <property type="nucleotide sequence ID" value="NM_214563.1"/>
</dbReference>
<dbReference type="SMR" id="P98069"/>
<dbReference type="FunCoup" id="P98069">
    <property type="interactions" value="610"/>
</dbReference>
<dbReference type="STRING" id="7668.P98069"/>
<dbReference type="MEROPS" id="M12.016"/>
<dbReference type="EnsemblMetazoa" id="NM_214563">
    <property type="protein sequence ID" value="NP_999728"/>
    <property type="gene ID" value="GeneID_373360"/>
</dbReference>
<dbReference type="GeneID" id="373360"/>
<dbReference type="KEGG" id="spu:373360"/>
<dbReference type="CTD" id="649"/>
<dbReference type="eggNOG" id="KOG3714">
    <property type="taxonomic scope" value="Eukaryota"/>
</dbReference>
<dbReference type="InParanoid" id="P98069"/>
<dbReference type="OrthoDB" id="431034at2759"/>
<dbReference type="Proteomes" id="UP000007110">
    <property type="component" value="Unassembled WGS sequence"/>
</dbReference>
<dbReference type="GO" id="GO:0005615">
    <property type="term" value="C:extracellular space"/>
    <property type="evidence" value="ECO:0000318"/>
    <property type="project" value="GO_Central"/>
</dbReference>
<dbReference type="GO" id="GO:0005509">
    <property type="term" value="F:calcium ion binding"/>
    <property type="evidence" value="ECO:0007669"/>
    <property type="project" value="InterPro"/>
</dbReference>
<dbReference type="GO" id="GO:0004222">
    <property type="term" value="F:metalloendopeptidase activity"/>
    <property type="evidence" value="ECO:0000318"/>
    <property type="project" value="GO_Central"/>
</dbReference>
<dbReference type="GO" id="GO:0008270">
    <property type="term" value="F:zinc ion binding"/>
    <property type="evidence" value="ECO:0007669"/>
    <property type="project" value="InterPro"/>
</dbReference>
<dbReference type="GO" id="GO:0009953">
    <property type="term" value="P:dorsal/ventral pattern formation"/>
    <property type="evidence" value="ECO:0000318"/>
    <property type="project" value="GO_Central"/>
</dbReference>
<dbReference type="GO" id="GO:0016485">
    <property type="term" value="P:protein processing"/>
    <property type="evidence" value="ECO:0000318"/>
    <property type="project" value="GO_Central"/>
</dbReference>
<dbReference type="CDD" id="cd00041">
    <property type="entry name" value="CUB"/>
    <property type="match status" value="2"/>
</dbReference>
<dbReference type="CDD" id="cd00054">
    <property type="entry name" value="EGF_CA"/>
    <property type="match status" value="1"/>
</dbReference>
<dbReference type="CDD" id="cd04281">
    <property type="entry name" value="ZnMc_BMP1_TLD"/>
    <property type="match status" value="1"/>
</dbReference>
<dbReference type="FunFam" id="2.60.120.290:FF:000004">
    <property type="entry name" value="Metalloendopeptidase"/>
    <property type="match status" value="1"/>
</dbReference>
<dbReference type="FunFam" id="2.60.120.290:FF:000009">
    <property type="entry name" value="Metalloendopeptidase"/>
    <property type="match status" value="1"/>
</dbReference>
<dbReference type="FunFam" id="3.40.390.10:FF:000004">
    <property type="entry name" value="Metalloendopeptidase"/>
    <property type="match status" value="1"/>
</dbReference>
<dbReference type="FunFam" id="2.10.25.10:FF:000240">
    <property type="entry name" value="Vitamin K-dependent protein S"/>
    <property type="match status" value="1"/>
</dbReference>
<dbReference type="Gene3D" id="3.40.390.10">
    <property type="entry name" value="Collagenase (Catalytic Domain)"/>
    <property type="match status" value="1"/>
</dbReference>
<dbReference type="Gene3D" id="2.10.25.10">
    <property type="entry name" value="Laminin"/>
    <property type="match status" value="1"/>
</dbReference>
<dbReference type="Gene3D" id="2.60.120.290">
    <property type="entry name" value="Spermadhesin, CUB domain"/>
    <property type="match status" value="2"/>
</dbReference>
<dbReference type="InterPro" id="IPR015446">
    <property type="entry name" value="BMP_1/tolloid-like"/>
</dbReference>
<dbReference type="InterPro" id="IPR000859">
    <property type="entry name" value="CUB_dom"/>
</dbReference>
<dbReference type="InterPro" id="IPR001881">
    <property type="entry name" value="EGF-like_Ca-bd_dom"/>
</dbReference>
<dbReference type="InterPro" id="IPR000742">
    <property type="entry name" value="EGF-like_dom"/>
</dbReference>
<dbReference type="InterPro" id="IPR000152">
    <property type="entry name" value="EGF-type_Asp/Asn_hydroxyl_site"/>
</dbReference>
<dbReference type="InterPro" id="IPR018097">
    <property type="entry name" value="EGF_Ca-bd_CS"/>
</dbReference>
<dbReference type="InterPro" id="IPR024079">
    <property type="entry name" value="MetalloPept_cat_dom_sf"/>
</dbReference>
<dbReference type="InterPro" id="IPR001506">
    <property type="entry name" value="Peptidase_M12A"/>
</dbReference>
<dbReference type="InterPro" id="IPR006026">
    <property type="entry name" value="Peptidase_Metallo"/>
</dbReference>
<dbReference type="InterPro" id="IPR035914">
    <property type="entry name" value="Sperma_CUB_dom_sf"/>
</dbReference>
<dbReference type="InterPro" id="IPR034036">
    <property type="entry name" value="ZnMP_TLD/BMP1"/>
</dbReference>
<dbReference type="PANTHER" id="PTHR10127">
    <property type="entry name" value="DISCOIDIN, CUB, EGF, LAMININ , AND ZINC METALLOPROTEASE DOMAIN CONTAINING"/>
    <property type="match status" value="1"/>
</dbReference>
<dbReference type="PANTHER" id="PTHR10127:SF861">
    <property type="entry name" value="DORSAL-VENTRAL PATTERNING PROTEIN TOLLOID-RELATED"/>
    <property type="match status" value="1"/>
</dbReference>
<dbReference type="Pfam" id="PF01400">
    <property type="entry name" value="Astacin"/>
    <property type="match status" value="1"/>
</dbReference>
<dbReference type="Pfam" id="PF00431">
    <property type="entry name" value="CUB"/>
    <property type="match status" value="2"/>
</dbReference>
<dbReference type="Pfam" id="PF14670">
    <property type="entry name" value="FXa_inhibition"/>
    <property type="match status" value="1"/>
</dbReference>
<dbReference type="PIRSF" id="PIRSF001199">
    <property type="entry name" value="BMP_1/tolloid-like"/>
    <property type="match status" value="1"/>
</dbReference>
<dbReference type="PRINTS" id="PR00480">
    <property type="entry name" value="ASTACIN"/>
</dbReference>
<dbReference type="SMART" id="SM00042">
    <property type="entry name" value="CUB"/>
    <property type="match status" value="2"/>
</dbReference>
<dbReference type="SMART" id="SM00181">
    <property type="entry name" value="EGF"/>
    <property type="match status" value="1"/>
</dbReference>
<dbReference type="SMART" id="SM00179">
    <property type="entry name" value="EGF_CA"/>
    <property type="match status" value="1"/>
</dbReference>
<dbReference type="SMART" id="SM00235">
    <property type="entry name" value="ZnMc"/>
    <property type="match status" value="1"/>
</dbReference>
<dbReference type="SUPFAM" id="SSF57196">
    <property type="entry name" value="EGF/Laminin"/>
    <property type="match status" value="1"/>
</dbReference>
<dbReference type="SUPFAM" id="SSF55486">
    <property type="entry name" value="Metalloproteases ('zincins'), catalytic domain"/>
    <property type="match status" value="1"/>
</dbReference>
<dbReference type="SUPFAM" id="SSF49854">
    <property type="entry name" value="Spermadhesin, CUB domain"/>
    <property type="match status" value="2"/>
</dbReference>
<dbReference type="PROSITE" id="PS51864">
    <property type="entry name" value="ASTACIN"/>
    <property type="match status" value="1"/>
</dbReference>
<dbReference type="PROSITE" id="PS00010">
    <property type="entry name" value="ASX_HYDROXYL"/>
    <property type="match status" value="1"/>
</dbReference>
<dbReference type="PROSITE" id="PS01180">
    <property type="entry name" value="CUB"/>
    <property type="match status" value="2"/>
</dbReference>
<dbReference type="PROSITE" id="PS01186">
    <property type="entry name" value="EGF_2"/>
    <property type="match status" value="1"/>
</dbReference>
<dbReference type="PROSITE" id="PS50026">
    <property type="entry name" value="EGF_3"/>
    <property type="match status" value="1"/>
</dbReference>
<dbReference type="PROSITE" id="PS01187">
    <property type="entry name" value="EGF_CA"/>
    <property type="match status" value="1"/>
</dbReference>
<dbReference type="PROSITE" id="PS00142">
    <property type="entry name" value="ZINC_PROTEASE"/>
    <property type="match status" value="1"/>
</dbReference>
<evidence type="ECO:0000250" key="1"/>
<evidence type="ECO:0000255" key="2"/>
<evidence type="ECO:0000255" key="3">
    <source>
        <dbReference type="PROSITE-ProRule" id="PRU00059"/>
    </source>
</evidence>
<evidence type="ECO:0000255" key="4">
    <source>
        <dbReference type="PROSITE-ProRule" id="PRU00076"/>
    </source>
</evidence>
<evidence type="ECO:0000255" key="5">
    <source>
        <dbReference type="PROSITE-ProRule" id="PRU01211"/>
    </source>
</evidence>
<name>BMPH_STRPU</name>
<keyword id="KW-0106">Calcium</keyword>
<keyword id="KW-0165">Cleavage on pair of basic residues</keyword>
<keyword id="KW-0217">Developmental protein</keyword>
<keyword id="KW-1015">Disulfide bond</keyword>
<keyword id="KW-0245">EGF-like domain</keyword>
<keyword id="KW-0325">Glycoprotein</keyword>
<keyword id="KW-0378">Hydrolase</keyword>
<keyword id="KW-0479">Metal-binding</keyword>
<keyword id="KW-0482">Metalloprotease</keyword>
<keyword id="KW-0645">Protease</keyword>
<keyword id="KW-1185">Reference proteome</keyword>
<keyword id="KW-0677">Repeat</keyword>
<keyword id="KW-0732">Signal</keyword>
<keyword id="KW-0862">Zinc</keyword>
<comment type="cofactor">
    <cofactor evidence="5">
        <name>Zn(2+)</name>
        <dbReference type="ChEBI" id="CHEBI:29105"/>
    </cofactor>
    <text evidence="5">Binds 1 zinc ion per subunit.</text>
</comment>
<comment type="tissue specificity">
    <text>Ectodermal and primary mesenchyme cells in hatched blastula.</text>
</comment>
<comment type="developmental stage">
    <text>Embryo; highest level before spiculogenesis.</text>
</comment>
<sequence length="639" mass="71894">MDLLYYMTVSLLGFILSLTTFIGETTRALSDDVSSPCKASGFLGDIALTEDDYEREMIRARHNREQYRRRILQERQTRTTGARHHIKKRTIEEAKVRHVRAVTARPERRWTDAVIPYEIDGNFTGSQRAMFKQAMRHWENYTCITFVERNPANSEHDNHIVFTYQACGCCSFVGRKGDGAQAVSVGKNCDKFGVVVHELGHVVGFWHEHTRPDRNEFVGIVHQNIVPGQEYNFRVLDAAEVDSLGETYDFASIMHYARNTFSRGIWLDTILPRKDPESGIRPEIGQRKHLSEGDIIQANLLYKCPSCGRTLLESTGNFSSPEWPGQYDGDQTCVWRISVTPGETISLQFTGFELVGSDGCWYNYLEVRDGHWRHSPLLGRFCGASLPDPILSSDSRLWIELKSSAHRYSRGFAANYEAICGGHIERESGTLQSPNYPDDYHPSKECVWLITMPANYTVGLSFQSFEIERHETCIYDYVEVRDGHEDTSPLIGRYCGYFIPDDIKSTGNKMMVTFVSDGSVNKGGFSADFFKEKDECAQPDQGGCMDVCVNTIGSYRCDCRPGYELSSDGRRCEVAAEVYSLVYEGISPALLIPSPIRGTRTVSGRSSHHLTTGSHSSLSPLTSRVTRCASTTTLMSVAV</sequence>
<proteinExistence type="evidence at transcript level"/>
<protein>
    <recommendedName>
        <fullName>Bone morphogenetic protein 1 homolog</fullName>
        <ecNumber>3.4.24.-</ecNumber>
    </recommendedName>
    <alternativeName>
        <fullName>SUBMP</fullName>
    </alternativeName>
</protein>
<accession>P98069</accession>
<reference key="1">
    <citation type="journal article" date="1994" name="Development">
        <title>Characterization of a homolog of human bone morphogenetic protein 1 in the embryo of the sea urchin, Strongylocentrotus purpuratus.</title>
        <authorList>
            <person name="Hwang S.P.L."/>
            <person name="Partin J.S."/>
            <person name="Lennarz W.J."/>
        </authorList>
    </citation>
    <scope>NUCLEOTIDE SEQUENCE [MRNA]</scope>
    <source>
        <tissue>Embryo</tissue>
    </source>
</reference>
<feature type="signal peptide" evidence="2">
    <location>
        <begin position="1"/>
        <end position="23"/>
    </location>
</feature>
<feature type="propeptide" id="PRO_0000028895" evidence="2">
    <location>
        <begin position="24"/>
        <end position="109"/>
    </location>
</feature>
<feature type="chain" id="PRO_0000028896" description="Bone morphogenetic protein 1 homolog">
    <location>
        <begin position="110"/>
        <end position="639"/>
    </location>
</feature>
<feature type="domain" description="Peptidase M12A" evidence="5">
    <location>
        <begin position="100"/>
        <end position="305"/>
    </location>
</feature>
<feature type="domain" description="CUB 1" evidence="3">
    <location>
        <begin position="307"/>
        <end position="419"/>
    </location>
</feature>
<feature type="domain" description="CUB 2" evidence="3">
    <location>
        <begin position="420"/>
        <end position="531"/>
    </location>
</feature>
<feature type="domain" description="EGF-like; calcium-binding" evidence="4">
    <location>
        <begin position="532"/>
        <end position="573"/>
    </location>
</feature>
<feature type="active site" evidence="5">
    <location>
        <position position="198"/>
    </location>
</feature>
<feature type="binding site" evidence="5">
    <location>
        <position position="197"/>
    </location>
    <ligand>
        <name>Zn(2+)</name>
        <dbReference type="ChEBI" id="CHEBI:29105"/>
        <note>catalytic</note>
    </ligand>
</feature>
<feature type="binding site" evidence="5">
    <location>
        <position position="201"/>
    </location>
    <ligand>
        <name>Zn(2+)</name>
        <dbReference type="ChEBI" id="CHEBI:29105"/>
        <note>catalytic</note>
    </ligand>
</feature>
<feature type="binding site" evidence="5">
    <location>
        <position position="207"/>
    </location>
    <ligand>
        <name>Zn(2+)</name>
        <dbReference type="ChEBI" id="CHEBI:29105"/>
        <note>catalytic</note>
    </ligand>
</feature>
<feature type="glycosylation site" description="N-linked (GlcNAc...) asparagine" evidence="2">
    <location>
        <position position="122"/>
    </location>
</feature>
<feature type="glycosylation site" description="N-linked (GlcNAc...) asparagine" evidence="2">
    <location>
        <position position="140"/>
    </location>
</feature>
<feature type="glycosylation site" description="N-linked (GlcNAc...) asparagine" evidence="2">
    <location>
        <position position="317"/>
    </location>
</feature>
<feature type="glycosylation site" description="N-linked (GlcNAc...) asparagine" evidence="2">
    <location>
        <position position="455"/>
    </location>
</feature>
<feature type="disulfide bond" evidence="5">
    <location>
        <begin position="143"/>
        <end position="304"/>
    </location>
</feature>
<feature type="disulfide bond" evidence="5">
    <location>
        <begin position="167"/>
        <end position="189"/>
    </location>
</feature>
<feature type="disulfide bond" evidence="5">
    <location>
        <begin position="169"/>
        <end position="170"/>
    </location>
</feature>
<feature type="disulfide bond" evidence="1">
    <location>
        <begin position="307"/>
        <end position="333"/>
    </location>
</feature>
<feature type="disulfide bond" evidence="1">
    <location>
        <begin position="360"/>
        <end position="382"/>
    </location>
</feature>
<feature type="disulfide bond" evidence="1">
    <location>
        <begin position="420"/>
        <end position="446"/>
    </location>
</feature>
<feature type="disulfide bond" evidence="1">
    <location>
        <begin position="473"/>
        <end position="495"/>
    </location>
</feature>
<feature type="disulfide bond" evidence="1">
    <location>
        <begin position="536"/>
        <end position="548"/>
    </location>
</feature>
<feature type="disulfide bond" evidence="1">
    <location>
        <begin position="544"/>
        <end position="557"/>
    </location>
</feature>
<feature type="disulfide bond" evidence="1">
    <location>
        <begin position="559"/>
        <end position="572"/>
    </location>
</feature>
<organism>
    <name type="scientific">Strongylocentrotus purpuratus</name>
    <name type="common">Purple sea urchin</name>
    <dbReference type="NCBI Taxonomy" id="7668"/>
    <lineage>
        <taxon>Eukaryota</taxon>
        <taxon>Metazoa</taxon>
        <taxon>Echinodermata</taxon>
        <taxon>Eleutherozoa</taxon>
        <taxon>Echinozoa</taxon>
        <taxon>Echinoidea</taxon>
        <taxon>Euechinoidea</taxon>
        <taxon>Echinacea</taxon>
        <taxon>Camarodonta</taxon>
        <taxon>Echinidea</taxon>
        <taxon>Strongylocentrotidae</taxon>
        <taxon>Strongylocentrotus</taxon>
    </lineage>
</organism>